<feature type="chain" id="PRO_1000015827" description="Glutamyl-tRNA(Gln) amidotransferase subunit A">
    <location>
        <begin position="1"/>
        <end position="483"/>
    </location>
</feature>
<feature type="active site" description="Charge relay system" evidence="1">
    <location>
        <position position="75"/>
    </location>
</feature>
<feature type="active site" description="Charge relay system" evidence="1">
    <location>
        <position position="150"/>
    </location>
</feature>
<feature type="active site" description="Acyl-ester intermediate" evidence="1">
    <location>
        <position position="174"/>
    </location>
</feature>
<organism>
    <name type="scientific">Deinococcus geothermalis (strain DSM 11300 / CIP 105573 / AG-3a)</name>
    <dbReference type="NCBI Taxonomy" id="319795"/>
    <lineage>
        <taxon>Bacteria</taxon>
        <taxon>Thermotogati</taxon>
        <taxon>Deinococcota</taxon>
        <taxon>Deinococci</taxon>
        <taxon>Deinococcales</taxon>
        <taxon>Deinococcaceae</taxon>
        <taxon>Deinococcus</taxon>
    </lineage>
</organism>
<gene>
    <name evidence="1" type="primary">gatA</name>
    <name type="ordered locus">Dgeo_0760</name>
</gene>
<name>GATA_DEIGD</name>
<evidence type="ECO:0000255" key="1">
    <source>
        <dbReference type="HAMAP-Rule" id="MF_00120"/>
    </source>
</evidence>
<protein>
    <recommendedName>
        <fullName evidence="1">Glutamyl-tRNA(Gln) amidotransferase subunit A</fullName>
        <shortName evidence="1">Glu-ADT subunit A</shortName>
        <ecNumber evidence="1">6.3.5.7</ecNumber>
    </recommendedName>
</protein>
<reference key="1">
    <citation type="submission" date="2006-04" db="EMBL/GenBank/DDBJ databases">
        <title>Complete sequence of chromosome of Deinococcus geothermalis DSM 11300.</title>
        <authorList>
            <person name="Copeland A."/>
            <person name="Lucas S."/>
            <person name="Lapidus A."/>
            <person name="Barry K."/>
            <person name="Detter J.C."/>
            <person name="Glavina del Rio T."/>
            <person name="Hammon N."/>
            <person name="Israni S."/>
            <person name="Dalin E."/>
            <person name="Tice H."/>
            <person name="Pitluck S."/>
            <person name="Brettin T."/>
            <person name="Bruce D."/>
            <person name="Han C."/>
            <person name="Tapia R."/>
            <person name="Saunders E."/>
            <person name="Gilna P."/>
            <person name="Schmutz J."/>
            <person name="Larimer F."/>
            <person name="Land M."/>
            <person name="Hauser L."/>
            <person name="Kyrpides N."/>
            <person name="Kim E."/>
            <person name="Daly M.J."/>
            <person name="Fredrickson J.K."/>
            <person name="Makarova K.S."/>
            <person name="Gaidamakova E.K."/>
            <person name="Zhai M."/>
            <person name="Richardson P."/>
        </authorList>
    </citation>
    <scope>NUCLEOTIDE SEQUENCE [LARGE SCALE GENOMIC DNA]</scope>
    <source>
        <strain>DSM 11300 / CIP 105573 / AG-3a</strain>
    </source>
</reference>
<dbReference type="EC" id="6.3.5.7" evidence="1"/>
<dbReference type="EMBL" id="CP000359">
    <property type="protein sequence ID" value="ABF45062.1"/>
    <property type="molecule type" value="Genomic_DNA"/>
</dbReference>
<dbReference type="RefSeq" id="WP_011529903.1">
    <property type="nucleotide sequence ID" value="NC_008025.1"/>
</dbReference>
<dbReference type="SMR" id="Q1J0C2"/>
<dbReference type="STRING" id="319795.Dgeo_0760"/>
<dbReference type="KEGG" id="dge:Dgeo_0760"/>
<dbReference type="eggNOG" id="COG0154">
    <property type="taxonomic scope" value="Bacteria"/>
</dbReference>
<dbReference type="HOGENOM" id="CLU_009600_0_3_0"/>
<dbReference type="Proteomes" id="UP000002431">
    <property type="component" value="Chromosome"/>
</dbReference>
<dbReference type="GO" id="GO:0030956">
    <property type="term" value="C:glutamyl-tRNA(Gln) amidotransferase complex"/>
    <property type="evidence" value="ECO:0007669"/>
    <property type="project" value="InterPro"/>
</dbReference>
<dbReference type="GO" id="GO:0005524">
    <property type="term" value="F:ATP binding"/>
    <property type="evidence" value="ECO:0007669"/>
    <property type="project" value="UniProtKB-KW"/>
</dbReference>
<dbReference type="GO" id="GO:0050567">
    <property type="term" value="F:glutaminyl-tRNA synthase (glutamine-hydrolyzing) activity"/>
    <property type="evidence" value="ECO:0007669"/>
    <property type="project" value="UniProtKB-UniRule"/>
</dbReference>
<dbReference type="GO" id="GO:0006412">
    <property type="term" value="P:translation"/>
    <property type="evidence" value="ECO:0007669"/>
    <property type="project" value="UniProtKB-UniRule"/>
</dbReference>
<dbReference type="Gene3D" id="3.90.1300.10">
    <property type="entry name" value="Amidase signature (AS) domain"/>
    <property type="match status" value="1"/>
</dbReference>
<dbReference type="HAMAP" id="MF_00120">
    <property type="entry name" value="GatA"/>
    <property type="match status" value="1"/>
</dbReference>
<dbReference type="InterPro" id="IPR000120">
    <property type="entry name" value="Amidase"/>
</dbReference>
<dbReference type="InterPro" id="IPR020556">
    <property type="entry name" value="Amidase_CS"/>
</dbReference>
<dbReference type="InterPro" id="IPR023631">
    <property type="entry name" value="Amidase_dom"/>
</dbReference>
<dbReference type="InterPro" id="IPR036928">
    <property type="entry name" value="AS_sf"/>
</dbReference>
<dbReference type="InterPro" id="IPR004412">
    <property type="entry name" value="GatA"/>
</dbReference>
<dbReference type="NCBIfam" id="TIGR00132">
    <property type="entry name" value="gatA"/>
    <property type="match status" value="1"/>
</dbReference>
<dbReference type="PANTHER" id="PTHR11895:SF151">
    <property type="entry name" value="GLUTAMYL-TRNA(GLN) AMIDOTRANSFERASE SUBUNIT A"/>
    <property type="match status" value="1"/>
</dbReference>
<dbReference type="PANTHER" id="PTHR11895">
    <property type="entry name" value="TRANSAMIDASE"/>
    <property type="match status" value="1"/>
</dbReference>
<dbReference type="Pfam" id="PF01425">
    <property type="entry name" value="Amidase"/>
    <property type="match status" value="1"/>
</dbReference>
<dbReference type="SUPFAM" id="SSF75304">
    <property type="entry name" value="Amidase signature (AS) enzymes"/>
    <property type="match status" value="1"/>
</dbReference>
<dbReference type="PROSITE" id="PS00571">
    <property type="entry name" value="AMIDASES"/>
    <property type="match status" value="1"/>
</dbReference>
<comment type="function">
    <text evidence="1">Allows the formation of correctly charged Gln-tRNA(Gln) through the transamidation of misacylated Glu-tRNA(Gln) in organisms which lack glutaminyl-tRNA synthetase. The reaction takes place in the presence of glutamine and ATP through an activated gamma-phospho-Glu-tRNA(Gln).</text>
</comment>
<comment type="catalytic activity">
    <reaction evidence="1">
        <text>L-glutamyl-tRNA(Gln) + L-glutamine + ATP + H2O = L-glutaminyl-tRNA(Gln) + L-glutamate + ADP + phosphate + H(+)</text>
        <dbReference type="Rhea" id="RHEA:17521"/>
        <dbReference type="Rhea" id="RHEA-COMP:9681"/>
        <dbReference type="Rhea" id="RHEA-COMP:9684"/>
        <dbReference type="ChEBI" id="CHEBI:15377"/>
        <dbReference type="ChEBI" id="CHEBI:15378"/>
        <dbReference type="ChEBI" id="CHEBI:29985"/>
        <dbReference type="ChEBI" id="CHEBI:30616"/>
        <dbReference type="ChEBI" id="CHEBI:43474"/>
        <dbReference type="ChEBI" id="CHEBI:58359"/>
        <dbReference type="ChEBI" id="CHEBI:78520"/>
        <dbReference type="ChEBI" id="CHEBI:78521"/>
        <dbReference type="ChEBI" id="CHEBI:456216"/>
        <dbReference type="EC" id="6.3.5.7"/>
    </reaction>
</comment>
<comment type="subunit">
    <text evidence="1">Heterotrimer of A, B and C subunits.</text>
</comment>
<comment type="similarity">
    <text evidence="1">Belongs to the amidase family. GatA subfamily.</text>
</comment>
<sequence>MSECSTATDLARAVQARETTPQALLEAARRRAEAARDLNALISLNDRADEQAARVQVRLDAGETLPLAGVPIVVKDNLNVIGTRTTCGSRILANYVSPYDATAVERLTGAGAVIIGKANMDEFAMGSSTESSAWGPTLNPWDRERVPGGSSGGSAVAVAANLTPVALGSDTGGSVRQPAAFTGIYGLKPTYGRVSRYGLVAYASSLDQIGPFARSAADLALLMNVLAGHDPRDATSLDAPPAFRPGTPDDLQGLRVGVIREALEGNTPGVEAALNATLDALRGAGATVREVSVPSVQHAIAAYYLIATPEASSNLARYDGMVYGERVSAPDAVSSMTLTREQGFGREVKRRIMLGTYALSSGYYDAYYSKAMKVRRLIAQDFARAFGNVDVLVTPTSPFPAFRRGEKTQDPLAMYAADVDTVAINLAGLPALSVPAGFERVDGVRLPVGVQLIAPPLQDERLVALAGGLEGIGAVRMEVAPAS</sequence>
<keyword id="KW-0067">ATP-binding</keyword>
<keyword id="KW-0436">Ligase</keyword>
<keyword id="KW-0547">Nucleotide-binding</keyword>
<keyword id="KW-0648">Protein biosynthesis</keyword>
<proteinExistence type="inferred from homology"/>
<accession>Q1J0C2</accession>